<keyword id="KW-0007">Acetylation</keyword>
<keyword id="KW-0963">Cytoplasm</keyword>
<keyword id="KW-1185">Reference proteome</keyword>
<keyword id="KW-0687">Ribonucleoprotein</keyword>
<keyword id="KW-0689">Ribosomal protein</keyword>
<evidence type="ECO:0000255" key="1">
    <source>
        <dbReference type="HAMAP-Rule" id="MF_03122"/>
    </source>
</evidence>
<evidence type="ECO:0000256" key="2">
    <source>
        <dbReference type="SAM" id="MobiDB-lite"/>
    </source>
</evidence>
<evidence type="ECO:0000305" key="3"/>
<dbReference type="EMBL" id="GU395241">
    <property type="protein sequence ID" value="ADD84599.1"/>
    <property type="molecule type" value="mRNA"/>
</dbReference>
<dbReference type="EMBL" id="CM001231">
    <property type="protein sequence ID" value="EHA57043.1"/>
    <property type="molecule type" value="Genomic_DNA"/>
</dbReference>
<dbReference type="RefSeq" id="XP_003709655.1">
    <property type="nucleotide sequence ID" value="XM_003709607.1"/>
</dbReference>
<dbReference type="SMR" id="D4NXE7"/>
<dbReference type="FunCoup" id="D4NXE7">
    <property type="interactions" value="1286"/>
</dbReference>
<dbReference type="STRING" id="242507.D4NXE7"/>
<dbReference type="EnsemblFungi" id="MGG_06919T0">
    <property type="protein sequence ID" value="MGG_06919T0"/>
    <property type="gene ID" value="MGG_06919"/>
</dbReference>
<dbReference type="GeneID" id="2685092"/>
<dbReference type="KEGG" id="mgr:MGG_06919"/>
<dbReference type="VEuPathDB" id="FungiDB:MGG_06919"/>
<dbReference type="eggNOG" id="KOG1628">
    <property type="taxonomic scope" value="Eukaryota"/>
</dbReference>
<dbReference type="HOGENOM" id="CLU_062507_0_0_1"/>
<dbReference type="InParanoid" id="D4NXE7"/>
<dbReference type="OMA" id="TRFKGHE"/>
<dbReference type="OrthoDB" id="9834376at2759"/>
<dbReference type="Proteomes" id="UP000009058">
    <property type="component" value="Chromosome 1"/>
</dbReference>
<dbReference type="GO" id="GO:0022627">
    <property type="term" value="C:cytosolic small ribosomal subunit"/>
    <property type="evidence" value="ECO:0007669"/>
    <property type="project" value="UniProtKB-UniRule"/>
</dbReference>
<dbReference type="GO" id="GO:0003735">
    <property type="term" value="F:structural constituent of ribosome"/>
    <property type="evidence" value="ECO:0007669"/>
    <property type="project" value="UniProtKB-UniRule"/>
</dbReference>
<dbReference type="GO" id="GO:0006412">
    <property type="term" value="P:translation"/>
    <property type="evidence" value="ECO:0007669"/>
    <property type="project" value="UniProtKB-UniRule"/>
</dbReference>
<dbReference type="HAMAP" id="MF_03122">
    <property type="entry name" value="Ribosomal_eS1_euk"/>
    <property type="match status" value="1"/>
</dbReference>
<dbReference type="InterPro" id="IPR001593">
    <property type="entry name" value="Ribosomal_eS1"/>
</dbReference>
<dbReference type="InterPro" id="IPR018281">
    <property type="entry name" value="Ribosomal_eS1_CS"/>
</dbReference>
<dbReference type="InterPro" id="IPR027500">
    <property type="entry name" value="Ribosomal_eS1_euk"/>
</dbReference>
<dbReference type="PANTHER" id="PTHR11830">
    <property type="entry name" value="40S RIBOSOMAL PROTEIN S3A"/>
    <property type="match status" value="1"/>
</dbReference>
<dbReference type="Pfam" id="PF01015">
    <property type="entry name" value="Ribosomal_S3Ae"/>
    <property type="match status" value="1"/>
</dbReference>
<dbReference type="SMART" id="SM01397">
    <property type="entry name" value="Ribosomal_S3Ae"/>
    <property type="match status" value="1"/>
</dbReference>
<dbReference type="PROSITE" id="PS01191">
    <property type="entry name" value="RIBOSOMAL_S3AE"/>
    <property type="match status" value="1"/>
</dbReference>
<gene>
    <name evidence="1" type="primary">RPS1</name>
    <name type="ORF">MGG_06919</name>
</gene>
<proteinExistence type="evidence at transcript level"/>
<comment type="subunit">
    <text evidence="1">Component of the small ribosomal subunit. Mature ribosomes consist of a small (40S) and a large (60S) subunit. The 40S subunit contains about 33 different proteins and 1 molecule of RNA (18S). The 60S subunit contains about 49 different proteins and 3 molecules of RNA (25S, 5.8S and 5S).</text>
</comment>
<comment type="subcellular location">
    <subcellularLocation>
        <location evidence="1">Cytoplasm</location>
    </subcellularLocation>
</comment>
<comment type="similarity">
    <text evidence="1">Belongs to the eukaryotic ribosomal protein eS1 family.</text>
</comment>
<name>RS3A_PYRO7</name>
<feature type="initiator methionine" description="Removed" evidence="1">
    <location>
        <position position="1"/>
    </location>
</feature>
<feature type="chain" id="PRO_0000389384" description="Small ribosomal subunit protein eS1">
    <location>
        <begin position="2"/>
        <end position="256"/>
    </location>
</feature>
<feature type="region of interest" description="Disordered" evidence="2">
    <location>
        <begin position="1"/>
        <end position="22"/>
    </location>
</feature>
<feature type="compositionally biased region" description="Basic residues" evidence="2">
    <location>
        <begin position="1"/>
        <end position="18"/>
    </location>
</feature>
<feature type="modified residue" description="N-acetylalanine; partial" evidence="1">
    <location>
        <position position="2"/>
    </location>
</feature>
<feature type="sequence conflict" description="In Ref. 1; ADD84599." evidence="3" ref="1">
    <original>K</original>
    <variation>N</variation>
    <location>
        <position position="216"/>
    </location>
</feature>
<protein>
    <recommendedName>
        <fullName evidence="1">Small ribosomal subunit protein eS1</fullName>
    </recommendedName>
    <alternativeName>
        <fullName evidence="3">40S ribosomal protein S1</fullName>
    </alternativeName>
</protein>
<reference key="1">
    <citation type="journal article" date="2010" name="BMC Genomics">
        <title>Identification and analysis of in planta expressed genes of Magnaporthe oryzae.</title>
        <authorList>
            <person name="Kim S."/>
            <person name="Park J."/>
            <person name="Park S.Y."/>
            <person name="Mitchell T.K."/>
            <person name="Lee Y.H."/>
        </authorList>
    </citation>
    <scope>NUCLEOTIDE SEQUENCE [MRNA]</scope>
    <source>
        <strain>70-15 / ATCC MYA-4617 / FGSC 8958</strain>
    </source>
</reference>
<reference key="2">
    <citation type="journal article" date="2005" name="Nature">
        <title>The genome sequence of the rice blast fungus Magnaporthe grisea.</title>
        <authorList>
            <person name="Dean R.A."/>
            <person name="Talbot N.J."/>
            <person name="Ebbole D.J."/>
            <person name="Farman M.L."/>
            <person name="Mitchell T.K."/>
            <person name="Orbach M.J."/>
            <person name="Thon M.R."/>
            <person name="Kulkarni R."/>
            <person name="Xu J.-R."/>
            <person name="Pan H."/>
            <person name="Read N.D."/>
            <person name="Lee Y.-H."/>
            <person name="Carbone I."/>
            <person name="Brown D."/>
            <person name="Oh Y.Y."/>
            <person name="Donofrio N."/>
            <person name="Jeong J.S."/>
            <person name="Soanes D.M."/>
            <person name="Djonovic S."/>
            <person name="Kolomiets E."/>
            <person name="Rehmeyer C."/>
            <person name="Li W."/>
            <person name="Harding M."/>
            <person name="Kim S."/>
            <person name="Lebrun M.-H."/>
            <person name="Bohnert H."/>
            <person name="Coughlan S."/>
            <person name="Butler J."/>
            <person name="Calvo S.E."/>
            <person name="Ma L.-J."/>
            <person name="Nicol R."/>
            <person name="Purcell S."/>
            <person name="Nusbaum C."/>
            <person name="Galagan J.E."/>
            <person name="Birren B.W."/>
        </authorList>
    </citation>
    <scope>NUCLEOTIDE SEQUENCE [LARGE SCALE GENOMIC DNA]</scope>
    <source>
        <strain>70-15 / ATCC MYA-4617 / FGSC 8958</strain>
    </source>
</reference>
<accession>D4NXE7</accession>
<accession>A4R1I7</accession>
<accession>G4MNC9</accession>
<accession>Q5EMY6</accession>
<sequence length="256" mass="29275">MAVGKNKRLSKGKKGLKKKTQDPFARKDWYGIKAPAPFNIRDVGKTLVNRSSGMKNANDALKGRIFEVSLADLQKDEDHAFRKIKLRVDEVQGKNCLTNFHGLDFTSDKLRSLVRKWQSLIEANVTVKTTDDYLLRLFAIAFTKRRPNQIKKTTYAASSQIRAIRRKMTEIIQREASTCTLQQLTNKLIPEVIGREIEKATQGIYPLQNVHIRKVKLLKQPKFDLGGLLALHGESTTDEQGQKVEREFKERVLEEV</sequence>
<organism>
    <name type="scientific">Pyricularia oryzae (strain 70-15 / ATCC MYA-4617 / FGSC 8958)</name>
    <name type="common">Rice blast fungus</name>
    <name type="synonym">Magnaporthe oryzae</name>
    <dbReference type="NCBI Taxonomy" id="242507"/>
    <lineage>
        <taxon>Eukaryota</taxon>
        <taxon>Fungi</taxon>
        <taxon>Dikarya</taxon>
        <taxon>Ascomycota</taxon>
        <taxon>Pezizomycotina</taxon>
        <taxon>Sordariomycetes</taxon>
        <taxon>Sordariomycetidae</taxon>
        <taxon>Magnaporthales</taxon>
        <taxon>Pyriculariaceae</taxon>
        <taxon>Pyricularia</taxon>
    </lineage>
</organism>